<organism>
    <name type="scientific">Agrotis ipsilon</name>
    <name type="common">Black cutworm moth</name>
    <dbReference type="NCBI Taxonomy" id="56364"/>
    <lineage>
        <taxon>Eukaryota</taxon>
        <taxon>Metazoa</taxon>
        <taxon>Ecdysozoa</taxon>
        <taxon>Arthropoda</taxon>
        <taxon>Hexapoda</taxon>
        <taxon>Insecta</taxon>
        <taxon>Pterygota</taxon>
        <taxon>Neoptera</taxon>
        <taxon>Endopterygota</taxon>
        <taxon>Lepidoptera</taxon>
        <taxon>Glossata</taxon>
        <taxon>Ditrysia</taxon>
        <taxon>Noctuoidea</taxon>
        <taxon>Noctuidae</taxon>
        <taxon>Noctuinae</taxon>
        <taxon>Noctuini</taxon>
        <taxon>Agrotis</taxon>
    </lineage>
</organism>
<reference evidence="4" key="1">
    <citation type="journal article" date="2018" name="J. Proteome Res.">
        <title>Mating-induced differential peptidomics of neuropeptides and protein hormones in Agrotis ipsilon moths.</title>
        <authorList>
            <person name="Diesner M."/>
            <person name="Gallot A."/>
            <person name="Binz H."/>
            <person name="Gaertner C."/>
            <person name="Vitecek S."/>
            <person name="Kahnt J."/>
            <person name="Schachtner J."/>
            <person name="Jacquin-Joly E."/>
            <person name="Gadenne C."/>
        </authorList>
    </citation>
    <scope>NUCLEOTIDE SEQUENCE [MRNA]</scope>
    <scope>PROTEIN SEQUENCE OF 211-217</scope>
    <scope>TISSUE SPECIFICITY</scope>
    <scope>MASS SPECTROMETRY</scope>
    <scope>IDENTIFICATION BY MASS SPECTROMETRY</scope>
</reference>
<proteinExistence type="evidence at protein level"/>
<comment type="subcellular location">
    <subcellularLocation>
        <location evidence="4">Secreted</location>
    </subcellularLocation>
</comment>
<comment type="tissue specificity">
    <text evidence="2">ITG-like peptide: Expressed in corpora cardiaca (CC), corpora allata (CA), antennal lobe (AL) and gnathal ganglion (GNG) (at protein level). Expression in AL detected in all animals, expression in GNG detected in most animals and in CA and CC detected in few animals (at protein level).</text>
</comment>
<comment type="mass spectrometry"/>
<comment type="caution">
    <text evidence="4">Further mature peptides might exist.</text>
</comment>
<feature type="signal peptide" evidence="1">
    <location>
        <begin position="1"/>
        <end position="21"/>
    </location>
</feature>
<feature type="propeptide" id="PRO_0000444174" evidence="4">
    <location>
        <begin position="22"/>
        <end position="208"/>
    </location>
</feature>
<feature type="peptide" id="PRO_0000444175" description="ITG-like peptide" evidence="2">
    <location>
        <begin position="211"/>
        <end position="217"/>
    </location>
</feature>
<keyword id="KW-0165">Cleavage on pair of basic residues</keyword>
<keyword id="KW-0903">Direct protein sequencing</keyword>
<keyword id="KW-0527">Neuropeptide</keyword>
<keyword id="KW-0964">Secreted</keyword>
<keyword id="KW-0732">Signal</keyword>
<protein>
    <recommendedName>
        <fullName evidence="3">ITG-like peptide</fullName>
    </recommendedName>
</protein>
<sequence>MHRTMAVTAVLVLSAAGAAHAWGGLFNRFSSDMLANLGYGRSPYRHYPYGQEPEEVYAEALEGNRLDDVIDEPGHCYSAPCTTNGDCCRGLLCLDTEDGGRCLPAFAGRKLGEICNRENQCDAGLVCEEVVPGEMHVCRPPTAGRKQYNEDCNSSSECDVTRGLCCIMQRRHRQKPRKSCGYFKEPLVCIGPVATDQIREFVQHTAGEKRIGVYRLH</sequence>
<accession>C0HKU1</accession>
<name>ITGL_AGRIP</name>
<dbReference type="SMR" id="C0HKU1"/>
<dbReference type="GO" id="GO:0005576">
    <property type="term" value="C:extracellular region"/>
    <property type="evidence" value="ECO:0007669"/>
    <property type="project" value="UniProtKB-SubCell"/>
</dbReference>
<dbReference type="GO" id="GO:0007218">
    <property type="term" value="P:neuropeptide signaling pathway"/>
    <property type="evidence" value="ECO:0007669"/>
    <property type="project" value="UniProtKB-KW"/>
</dbReference>
<evidence type="ECO:0000255" key="1"/>
<evidence type="ECO:0000269" key="2">
    <source>
    </source>
</evidence>
<evidence type="ECO:0000303" key="3">
    <source>
    </source>
</evidence>
<evidence type="ECO:0000305" key="4"/>